<accession>Q2SYZ3</accession>
<organism>
    <name type="scientific">Burkholderia thailandensis (strain ATCC 700388 / DSM 13276 / CCUG 48851 / CIP 106301 / E264)</name>
    <dbReference type="NCBI Taxonomy" id="271848"/>
    <lineage>
        <taxon>Bacteria</taxon>
        <taxon>Pseudomonadati</taxon>
        <taxon>Pseudomonadota</taxon>
        <taxon>Betaproteobacteria</taxon>
        <taxon>Burkholderiales</taxon>
        <taxon>Burkholderiaceae</taxon>
        <taxon>Burkholderia</taxon>
        <taxon>pseudomallei group</taxon>
    </lineage>
</organism>
<reference key="1">
    <citation type="journal article" date="2005" name="BMC Genomics">
        <title>Bacterial genome adaptation to niches: divergence of the potential virulence genes in three Burkholderia species of different survival strategies.</title>
        <authorList>
            <person name="Kim H.S."/>
            <person name="Schell M.A."/>
            <person name="Yu Y."/>
            <person name="Ulrich R.L."/>
            <person name="Sarria S.H."/>
            <person name="Nierman W.C."/>
            <person name="DeShazer D."/>
        </authorList>
    </citation>
    <scope>NUCLEOTIDE SEQUENCE [LARGE SCALE GENOMIC DNA]</scope>
    <source>
        <strain>ATCC 700388 / DSM 13276 / CCUG 48851 / CIP 106301 / E264</strain>
    </source>
</reference>
<gene>
    <name evidence="1" type="primary">dnaJ</name>
    <name type="ordered locus">BTH_I1309</name>
</gene>
<proteinExistence type="inferred from homology"/>
<dbReference type="EMBL" id="CP000086">
    <property type="protein sequence ID" value="ABC37437.1"/>
    <property type="molecule type" value="Genomic_DNA"/>
</dbReference>
<dbReference type="RefSeq" id="WP_009889258.1">
    <property type="nucleotide sequence ID" value="NZ_CP008785.1"/>
</dbReference>
<dbReference type="SMR" id="Q2SYZ3"/>
<dbReference type="GeneID" id="45121053"/>
<dbReference type="KEGG" id="bte:BTH_I1309"/>
<dbReference type="HOGENOM" id="CLU_017633_0_7_4"/>
<dbReference type="Proteomes" id="UP000001930">
    <property type="component" value="Chromosome I"/>
</dbReference>
<dbReference type="GO" id="GO:0005737">
    <property type="term" value="C:cytoplasm"/>
    <property type="evidence" value="ECO:0007669"/>
    <property type="project" value="UniProtKB-SubCell"/>
</dbReference>
<dbReference type="GO" id="GO:0005524">
    <property type="term" value="F:ATP binding"/>
    <property type="evidence" value="ECO:0007669"/>
    <property type="project" value="InterPro"/>
</dbReference>
<dbReference type="GO" id="GO:0031072">
    <property type="term" value="F:heat shock protein binding"/>
    <property type="evidence" value="ECO:0007669"/>
    <property type="project" value="InterPro"/>
</dbReference>
<dbReference type="GO" id="GO:0051082">
    <property type="term" value="F:unfolded protein binding"/>
    <property type="evidence" value="ECO:0007669"/>
    <property type="project" value="UniProtKB-UniRule"/>
</dbReference>
<dbReference type="GO" id="GO:0008270">
    <property type="term" value="F:zinc ion binding"/>
    <property type="evidence" value="ECO:0007669"/>
    <property type="project" value="UniProtKB-UniRule"/>
</dbReference>
<dbReference type="GO" id="GO:0051085">
    <property type="term" value="P:chaperone cofactor-dependent protein refolding"/>
    <property type="evidence" value="ECO:0007669"/>
    <property type="project" value="TreeGrafter"/>
</dbReference>
<dbReference type="GO" id="GO:0006260">
    <property type="term" value="P:DNA replication"/>
    <property type="evidence" value="ECO:0007669"/>
    <property type="project" value="UniProtKB-KW"/>
</dbReference>
<dbReference type="GO" id="GO:0042026">
    <property type="term" value="P:protein refolding"/>
    <property type="evidence" value="ECO:0007669"/>
    <property type="project" value="TreeGrafter"/>
</dbReference>
<dbReference type="GO" id="GO:0009408">
    <property type="term" value="P:response to heat"/>
    <property type="evidence" value="ECO:0007669"/>
    <property type="project" value="InterPro"/>
</dbReference>
<dbReference type="CDD" id="cd06257">
    <property type="entry name" value="DnaJ"/>
    <property type="match status" value="1"/>
</dbReference>
<dbReference type="CDD" id="cd10747">
    <property type="entry name" value="DnaJ_C"/>
    <property type="match status" value="1"/>
</dbReference>
<dbReference type="CDD" id="cd10719">
    <property type="entry name" value="DnaJ_zf"/>
    <property type="match status" value="1"/>
</dbReference>
<dbReference type="FunFam" id="1.10.287.110:FF:000031">
    <property type="entry name" value="Molecular chaperone DnaJ"/>
    <property type="match status" value="1"/>
</dbReference>
<dbReference type="FunFam" id="2.10.230.10:FF:000002">
    <property type="entry name" value="Molecular chaperone DnaJ"/>
    <property type="match status" value="1"/>
</dbReference>
<dbReference type="FunFam" id="2.60.260.20:FF:000004">
    <property type="entry name" value="Molecular chaperone DnaJ"/>
    <property type="match status" value="1"/>
</dbReference>
<dbReference type="Gene3D" id="1.10.287.110">
    <property type="entry name" value="DnaJ domain"/>
    <property type="match status" value="1"/>
</dbReference>
<dbReference type="Gene3D" id="2.10.230.10">
    <property type="entry name" value="Heat shock protein DnaJ, cysteine-rich domain"/>
    <property type="match status" value="1"/>
</dbReference>
<dbReference type="Gene3D" id="2.60.260.20">
    <property type="entry name" value="Urease metallochaperone UreE, N-terminal domain"/>
    <property type="match status" value="2"/>
</dbReference>
<dbReference type="HAMAP" id="MF_01152">
    <property type="entry name" value="DnaJ"/>
    <property type="match status" value="1"/>
</dbReference>
<dbReference type="InterPro" id="IPR012724">
    <property type="entry name" value="DnaJ"/>
</dbReference>
<dbReference type="InterPro" id="IPR002939">
    <property type="entry name" value="DnaJ_C"/>
</dbReference>
<dbReference type="InterPro" id="IPR001623">
    <property type="entry name" value="DnaJ_domain"/>
</dbReference>
<dbReference type="InterPro" id="IPR018253">
    <property type="entry name" value="DnaJ_domain_CS"/>
</dbReference>
<dbReference type="InterPro" id="IPR008971">
    <property type="entry name" value="HSP40/DnaJ_pept-bd"/>
</dbReference>
<dbReference type="InterPro" id="IPR001305">
    <property type="entry name" value="HSP_DnaJ_Cys-rich_dom"/>
</dbReference>
<dbReference type="InterPro" id="IPR036410">
    <property type="entry name" value="HSP_DnaJ_Cys-rich_dom_sf"/>
</dbReference>
<dbReference type="InterPro" id="IPR036869">
    <property type="entry name" value="J_dom_sf"/>
</dbReference>
<dbReference type="NCBIfam" id="TIGR02349">
    <property type="entry name" value="DnaJ_bact"/>
    <property type="match status" value="1"/>
</dbReference>
<dbReference type="NCBIfam" id="NF008035">
    <property type="entry name" value="PRK10767.1"/>
    <property type="match status" value="1"/>
</dbReference>
<dbReference type="PANTHER" id="PTHR43096:SF48">
    <property type="entry name" value="CHAPERONE PROTEIN DNAJ"/>
    <property type="match status" value="1"/>
</dbReference>
<dbReference type="PANTHER" id="PTHR43096">
    <property type="entry name" value="DNAJ HOMOLOG 1, MITOCHONDRIAL-RELATED"/>
    <property type="match status" value="1"/>
</dbReference>
<dbReference type="Pfam" id="PF00226">
    <property type="entry name" value="DnaJ"/>
    <property type="match status" value="1"/>
</dbReference>
<dbReference type="Pfam" id="PF01556">
    <property type="entry name" value="DnaJ_C"/>
    <property type="match status" value="1"/>
</dbReference>
<dbReference type="Pfam" id="PF00684">
    <property type="entry name" value="DnaJ_CXXCXGXG"/>
    <property type="match status" value="1"/>
</dbReference>
<dbReference type="PRINTS" id="PR00625">
    <property type="entry name" value="JDOMAIN"/>
</dbReference>
<dbReference type="SMART" id="SM00271">
    <property type="entry name" value="DnaJ"/>
    <property type="match status" value="1"/>
</dbReference>
<dbReference type="SUPFAM" id="SSF46565">
    <property type="entry name" value="Chaperone J-domain"/>
    <property type="match status" value="1"/>
</dbReference>
<dbReference type="SUPFAM" id="SSF57938">
    <property type="entry name" value="DnaJ/Hsp40 cysteine-rich domain"/>
    <property type="match status" value="1"/>
</dbReference>
<dbReference type="SUPFAM" id="SSF49493">
    <property type="entry name" value="HSP40/DnaJ peptide-binding domain"/>
    <property type="match status" value="2"/>
</dbReference>
<dbReference type="PROSITE" id="PS00636">
    <property type="entry name" value="DNAJ_1"/>
    <property type="match status" value="1"/>
</dbReference>
<dbReference type="PROSITE" id="PS50076">
    <property type="entry name" value="DNAJ_2"/>
    <property type="match status" value="1"/>
</dbReference>
<dbReference type="PROSITE" id="PS51188">
    <property type="entry name" value="ZF_CR"/>
    <property type="match status" value="1"/>
</dbReference>
<keyword id="KW-0143">Chaperone</keyword>
<keyword id="KW-0963">Cytoplasm</keyword>
<keyword id="KW-0235">DNA replication</keyword>
<keyword id="KW-0479">Metal-binding</keyword>
<keyword id="KW-0677">Repeat</keyword>
<keyword id="KW-0346">Stress response</keyword>
<keyword id="KW-0862">Zinc</keyword>
<keyword id="KW-0863">Zinc-finger</keyword>
<feature type="chain" id="PRO_1000085164" description="Chaperone protein DnaJ">
    <location>
        <begin position="1"/>
        <end position="376"/>
    </location>
</feature>
<feature type="domain" description="J" evidence="1">
    <location>
        <begin position="5"/>
        <end position="70"/>
    </location>
</feature>
<feature type="repeat" description="CXXCXGXG motif">
    <location>
        <begin position="149"/>
        <end position="156"/>
    </location>
</feature>
<feature type="repeat" description="CXXCXGXG motif">
    <location>
        <begin position="166"/>
        <end position="173"/>
    </location>
</feature>
<feature type="repeat" description="CXXCXGXG motif">
    <location>
        <begin position="188"/>
        <end position="195"/>
    </location>
</feature>
<feature type="repeat" description="CXXCXGXG motif">
    <location>
        <begin position="202"/>
        <end position="209"/>
    </location>
</feature>
<feature type="zinc finger region" description="CR-type" evidence="1">
    <location>
        <begin position="136"/>
        <end position="214"/>
    </location>
</feature>
<feature type="binding site" evidence="1">
    <location>
        <position position="149"/>
    </location>
    <ligand>
        <name>Zn(2+)</name>
        <dbReference type="ChEBI" id="CHEBI:29105"/>
        <label>1</label>
    </ligand>
</feature>
<feature type="binding site" evidence="1">
    <location>
        <position position="152"/>
    </location>
    <ligand>
        <name>Zn(2+)</name>
        <dbReference type="ChEBI" id="CHEBI:29105"/>
        <label>1</label>
    </ligand>
</feature>
<feature type="binding site" evidence="1">
    <location>
        <position position="166"/>
    </location>
    <ligand>
        <name>Zn(2+)</name>
        <dbReference type="ChEBI" id="CHEBI:29105"/>
        <label>2</label>
    </ligand>
</feature>
<feature type="binding site" evidence="1">
    <location>
        <position position="169"/>
    </location>
    <ligand>
        <name>Zn(2+)</name>
        <dbReference type="ChEBI" id="CHEBI:29105"/>
        <label>2</label>
    </ligand>
</feature>
<feature type="binding site" evidence="1">
    <location>
        <position position="188"/>
    </location>
    <ligand>
        <name>Zn(2+)</name>
        <dbReference type="ChEBI" id="CHEBI:29105"/>
        <label>2</label>
    </ligand>
</feature>
<feature type="binding site" evidence="1">
    <location>
        <position position="191"/>
    </location>
    <ligand>
        <name>Zn(2+)</name>
        <dbReference type="ChEBI" id="CHEBI:29105"/>
        <label>2</label>
    </ligand>
</feature>
<feature type="binding site" evidence="1">
    <location>
        <position position="202"/>
    </location>
    <ligand>
        <name>Zn(2+)</name>
        <dbReference type="ChEBI" id="CHEBI:29105"/>
        <label>1</label>
    </ligand>
</feature>
<feature type="binding site" evidence="1">
    <location>
        <position position="205"/>
    </location>
    <ligand>
        <name>Zn(2+)</name>
        <dbReference type="ChEBI" id="CHEBI:29105"/>
        <label>1</label>
    </ligand>
</feature>
<name>DNAJ_BURTA</name>
<sequence>MAKRDYYEVLGVAKNASDDEIKKAYRKLAMKYHPDRNPDSKDAEEHFKEAKEAYEMLSDSQKRAAYDQYGHAGVDPNMGAAGAQGFGGFADAFGDIFGDIFGQAAGGGRGRGGPQVYRGADLRYSMEITLEQAAHGYDTQIRVPSWASCGICHGSGAKPGTKPETCPTCHGQGTVRMSQGFFSIQQTCPKCHGTGTYIPEPCVHCHGSGKVKETKTLEVKIPAGIDDGMRIRSAGNGEPGINGGPSGDLYVEIHIKPHPVFERDGDDLHCQMPIPFTTAALGGEIEVPTLAGRASFTVAEGTQSGKTFRLRGKGIKGLRSSIAGDLYVHVQVETPVKLTDQQRDLLKQFEKSLAEGGPRHSPQSKSWFDRVKSFFE</sequence>
<protein>
    <recommendedName>
        <fullName evidence="1">Chaperone protein DnaJ</fullName>
    </recommendedName>
</protein>
<comment type="function">
    <text evidence="1">Participates actively in the response to hyperosmotic and heat shock by preventing the aggregation of stress-denatured proteins and by disaggregating proteins, also in an autonomous, DnaK-independent fashion. Unfolded proteins bind initially to DnaJ; upon interaction with the DnaJ-bound protein, DnaK hydrolyzes its bound ATP, resulting in the formation of a stable complex. GrpE releases ADP from DnaK; ATP binding to DnaK triggers the release of the substrate protein, thus completing the reaction cycle. Several rounds of ATP-dependent interactions between DnaJ, DnaK and GrpE are required for fully efficient folding. Also involved, together with DnaK and GrpE, in the DNA replication of plasmids through activation of initiation proteins.</text>
</comment>
<comment type="cofactor">
    <cofactor evidence="1">
        <name>Zn(2+)</name>
        <dbReference type="ChEBI" id="CHEBI:29105"/>
    </cofactor>
    <text evidence="1">Binds 2 Zn(2+) ions per monomer.</text>
</comment>
<comment type="subunit">
    <text evidence="1">Homodimer.</text>
</comment>
<comment type="subcellular location">
    <subcellularLocation>
        <location evidence="1">Cytoplasm</location>
    </subcellularLocation>
</comment>
<comment type="domain">
    <text evidence="1">The J domain is necessary and sufficient to stimulate DnaK ATPase activity. Zinc center 1 plays an important role in the autonomous, DnaK-independent chaperone activity of DnaJ. Zinc center 2 is essential for interaction with DnaK and for DnaJ activity.</text>
</comment>
<comment type="similarity">
    <text evidence="1">Belongs to the DnaJ family.</text>
</comment>
<evidence type="ECO:0000255" key="1">
    <source>
        <dbReference type="HAMAP-Rule" id="MF_01152"/>
    </source>
</evidence>